<evidence type="ECO:0000255" key="1">
    <source>
        <dbReference type="HAMAP-Rule" id="MF_00259"/>
    </source>
</evidence>
<dbReference type="EC" id="2.1.2.10" evidence="1"/>
<dbReference type="EMBL" id="CP001598">
    <property type="protein sequence ID" value="ACQ47381.1"/>
    <property type="molecule type" value="Genomic_DNA"/>
</dbReference>
<dbReference type="RefSeq" id="WP_000631769.1">
    <property type="nucleotide sequence ID" value="NC_012659.1"/>
</dbReference>
<dbReference type="SMR" id="C3P8D5"/>
<dbReference type="GeneID" id="72450912"/>
<dbReference type="KEGG" id="bai:BAA_4467"/>
<dbReference type="HOGENOM" id="CLU_007884_10_2_9"/>
<dbReference type="GO" id="GO:0005829">
    <property type="term" value="C:cytosol"/>
    <property type="evidence" value="ECO:0007669"/>
    <property type="project" value="TreeGrafter"/>
</dbReference>
<dbReference type="GO" id="GO:0005960">
    <property type="term" value="C:glycine cleavage complex"/>
    <property type="evidence" value="ECO:0007669"/>
    <property type="project" value="InterPro"/>
</dbReference>
<dbReference type="GO" id="GO:0004047">
    <property type="term" value="F:aminomethyltransferase activity"/>
    <property type="evidence" value="ECO:0007669"/>
    <property type="project" value="UniProtKB-UniRule"/>
</dbReference>
<dbReference type="GO" id="GO:0008483">
    <property type="term" value="F:transaminase activity"/>
    <property type="evidence" value="ECO:0007669"/>
    <property type="project" value="UniProtKB-KW"/>
</dbReference>
<dbReference type="GO" id="GO:0019464">
    <property type="term" value="P:glycine decarboxylation via glycine cleavage system"/>
    <property type="evidence" value="ECO:0007669"/>
    <property type="project" value="UniProtKB-UniRule"/>
</dbReference>
<dbReference type="FunFam" id="2.40.30.110:FF:000003">
    <property type="entry name" value="Aminomethyltransferase"/>
    <property type="match status" value="1"/>
</dbReference>
<dbReference type="FunFam" id="3.30.70.1400:FF:000001">
    <property type="entry name" value="Aminomethyltransferase"/>
    <property type="match status" value="1"/>
</dbReference>
<dbReference type="FunFam" id="4.10.1250.10:FF:000001">
    <property type="entry name" value="Aminomethyltransferase"/>
    <property type="match status" value="1"/>
</dbReference>
<dbReference type="Gene3D" id="2.40.30.110">
    <property type="entry name" value="Aminomethyltransferase beta-barrel domains"/>
    <property type="match status" value="1"/>
</dbReference>
<dbReference type="Gene3D" id="3.30.70.1400">
    <property type="entry name" value="Aminomethyltransferase beta-barrel domains"/>
    <property type="match status" value="1"/>
</dbReference>
<dbReference type="Gene3D" id="4.10.1250.10">
    <property type="entry name" value="Aminomethyltransferase fragment"/>
    <property type="match status" value="1"/>
</dbReference>
<dbReference type="Gene3D" id="3.30.1360.120">
    <property type="entry name" value="Probable tRNA modification gtpase trme, domain 1"/>
    <property type="match status" value="1"/>
</dbReference>
<dbReference type="HAMAP" id="MF_00259">
    <property type="entry name" value="GcvT"/>
    <property type="match status" value="1"/>
</dbReference>
<dbReference type="InterPro" id="IPR006223">
    <property type="entry name" value="GCS_T"/>
</dbReference>
<dbReference type="InterPro" id="IPR022903">
    <property type="entry name" value="GCS_T_bac"/>
</dbReference>
<dbReference type="InterPro" id="IPR013977">
    <property type="entry name" value="GCST_C"/>
</dbReference>
<dbReference type="InterPro" id="IPR006222">
    <property type="entry name" value="GCV_T_N"/>
</dbReference>
<dbReference type="InterPro" id="IPR028896">
    <property type="entry name" value="GcvT/YgfZ/DmdA"/>
</dbReference>
<dbReference type="InterPro" id="IPR029043">
    <property type="entry name" value="GcvT/YgfZ_C"/>
</dbReference>
<dbReference type="InterPro" id="IPR027266">
    <property type="entry name" value="TrmE/GcvT_dom1"/>
</dbReference>
<dbReference type="NCBIfam" id="TIGR00528">
    <property type="entry name" value="gcvT"/>
    <property type="match status" value="1"/>
</dbReference>
<dbReference type="NCBIfam" id="NF001567">
    <property type="entry name" value="PRK00389.1"/>
    <property type="match status" value="1"/>
</dbReference>
<dbReference type="PANTHER" id="PTHR43757">
    <property type="entry name" value="AMINOMETHYLTRANSFERASE"/>
    <property type="match status" value="1"/>
</dbReference>
<dbReference type="PANTHER" id="PTHR43757:SF2">
    <property type="entry name" value="AMINOMETHYLTRANSFERASE, MITOCHONDRIAL"/>
    <property type="match status" value="1"/>
</dbReference>
<dbReference type="Pfam" id="PF01571">
    <property type="entry name" value="GCV_T"/>
    <property type="match status" value="1"/>
</dbReference>
<dbReference type="Pfam" id="PF08669">
    <property type="entry name" value="GCV_T_C"/>
    <property type="match status" value="1"/>
</dbReference>
<dbReference type="PIRSF" id="PIRSF006487">
    <property type="entry name" value="GcvT"/>
    <property type="match status" value="1"/>
</dbReference>
<dbReference type="SUPFAM" id="SSF101790">
    <property type="entry name" value="Aminomethyltransferase beta-barrel domain"/>
    <property type="match status" value="1"/>
</dbReference>
<dbReference type="SUPFAM" id="SSF103025">
    <property type="entry name" value="Folate-binding domain"/>
    <property type="match status" value="1"/>
</dbReference>
<protein>
    <recommendedName>
        <fullName evidence="1">Aminomethyltransferase</fullName>
        <ecNumber evidence="1">2.1.2.10</ecNumber>
    </recommendedName>
    <alternativeName>
        <fullName evidence="1">Glycine cleavage system T protein</fullName>
    </alternativeName>
</protein>
<organism>
    <name type="scientific">Bacillus anthracis (strain A0248)</name>
    <dbReference type="NCBI Taxonomy" id="592021"/>
    <lineage>
        <taxon>Bacteria</taxon>
        <taxon>Bacillati</taxon>
        <taxon>Bacillota</taxon>
        <taxon>Bacilli</taxon>
        <taxon>Bacillales</taxon>
        <taxon>Bacillaceae</taxon>
        <taxon>Bacillus</taxon>
        <taxon>Bacillus cereus group</taxon>
    </lineage>
</organism>
<proteinExistence type="inferred from homology"/>
<accession>C3P8D5</accession>
<feature type="chain" id="PRO_1000125629" description="Aminomethyltransferase">
    <location>
        <begin position="1"/>
        <end position="366"/>
    </location>
</feature>
<sequence length="366" mass="40225">MITLQRTPLFDVYAKYGGKTIDFGGWELPVQFSSIKEEHEAVRTAAGLFDVSHMGEVEVKGVDSLAFLQRVVTNDVSTLKVGGAQYTAMCYENGGTVDDLLIYKRGEEDYLLVINASNIEKDYEWLASHVIGDATVVNVSSEVAQLAIQGPKAEGILQKVVSEDLKEIKFFKFKNDILVDGIPALVSRTGYTGEDGFEIYCKSEDAAKLWEKLLEVGAEEGLKACGLGARDTLRFEATLPLYGQELSKDITPIEAGIGFAVKTNKEADFFGKATLKEQKENGAPRKLVGIEVIERGIPRTHYPVFIGEEKIGEVTSGTQSPTLKKSIGLALIDVKYAAVDTEVEIEIRNKRVKAVVVPTPFYKRSK</sequence>
<name>GCST_BACAA</name>
<reference key="1">
    <citation type="submission" date="2009-04" db="EMBL/GenBank/DDBJ databases">
        <title>Genome sequence of Bacillus anthracis A0248.</title>
        <authorList>
            <person name="Dodson R.J."/>
            <person name="Munk A.C."/>
            <person name="Bruce D."/>
            <person name="Detter C."/>
            <person name="Tapia R."/>
            <person name="Sutton G."/>
            <person name="Sims D."/>
            <person name="Brettin T."/>
        </authorList>
    </citation>
    <scope>NUCLEOTIDE SEQUENCE [LARGE SCALE GENOMIC DNA]</scope>
    <source>
        <strain>A0248</strain>
    </source>
</reference>
<comment type="function">
    <text evidence="1">The glycine cleavage system catalyzes the degradation of glycine.</text>
</comment>
<comment type="catalytic activity">
    <reaction evidence="1">
        <text>N(6)-[(R)-S(8)-aminomethyldihydrolipoyl]-L-lysyl-[protein] + (6S)-5,6,7,8-tetrahydrofolate = N(6)-[(R)-dihydrolipoyl]-L-lysyl-[protein] + (6R)-5,10-methylene-5,6,7,8-tetrahydrofolate + NH4(+)</text>
        <dbReference type="Rhea" id="RHEA:16945"/>
        <dbReference type="Rhea" id="RHEA-COMP:10475"/>
        <dbReference type="Rhea" id="RHEA-COMP:10492"/>
        <dbReference type="ChEBI" id="CHEBI:15636"/>
        <dbReference type="ChEBI" id="CHEBI:28938"/>
        <dbReference type="ChEBI" id="CHEBI:57453"/>
        <dbReference type="ChEBI" id="CHEBI:83100"/>
        <dbReference type="ChEBI" id="CHEBI:83143"/>
        <dbReference type="EC" id="2.1.2.10"/>
    </reaction>
</comment>
<comment type="subunit">
    <text evidence="1">The glycine cleavage system is composed of four proteins: P, T, L and H.</text>
</comment>
<comment type="similarity">
    <text evidence="1">Belongs to the GcvT family.</text>
</comment>
<gene>
    <name evidence="1" type="primary">gcvT</name>
    <name type="ordered locus">BAA_4467</name>
</gene>
<keyword id="KW-0032">Aminotransferase</keyword>
<keyword id="KW-0808">Transferase</keyword>